<keyword id="KW-0119">Carbohydrate metabolism</keyword>
<keyword id="KW-0413">Isomerase</keyword>
<keyword id="KW-0521">NADP</keyword>
<evidence type="ECO:0000255" key="1">
    <source>
        <dbReference type="HAMAP-Rule" id="MF_01601"/>
    </source>
</evidence>
<gene>
    <name evidence="1" type="primary">hldD</name>
    <name type="ordered locus">KPK_0133</name>
</gene>
<accession>B5XTI2</accession>
<organism>
    <name type="scientific">Klebsiella pneumoniae (strain 342)</name>
    <dbReference type="NCBI Taxonomy" id="507522"/>
    <lineage>
        <taxon>Bacteria</taxon>
        <taxon>Pseudomonadati</taxon>
        <taxon>Pseudomonadota</taxon>
        <taxon>Gammaproteobacteria</taxon>
        <taxon>Enterobacterales</taxon>
        <taxon>Enterobacteriaceae</taxon>
        <taxon>Klebsiella/Raoultella group</taxon>
        <taxon>Klebsiella</taxon>
        <taxon>Klebsiella pneumoniae complex</taxon>
    </lineage>
</organism>
<dbReference type="EC" id="5.1.3.20" evidence="1"/>
<dbReference type="EMBL" id="CP000964">
    <property type="protein sequence ID" value="ACI08981.1"/>
    <property type="molecule type" value="Genomic_DNA"/>
</dbReference>
<dbReference type="SMR" id="B5XTI2"/>
<dbReference type="KEGG" id="kpe:KPK_0133"/>
<dbReference type="HOGENOM" id="CLU_007383_1_3_6"/>
<dbReference type="UniPathway" id="UPA00356">
    <property type="reaction ID" value="UER00440"/>
</dbReference>
<dbReference type="Proteomes" id="UP000001734">
    <property type="component" value="Chromosome"/>
</dbReference>
<dbReference type="GO" id="GO:0008712">
    <property type="term" value="F:ADP-glyceromanno-heptose 6-epimerase activity"/>
    <property type="evidence" value="ECO:0007669"/>
    <property type="project" value="UniProtKB-UniRule"/>
</dbReference>
<dbReference type="GO" id="GO:0050661">
    <property type="term" value="F:NADP binding"/>
    <property type="evidence" value="ECO:0007669"/>
    <property type="project" value="InterPro"/>
</dbReference>
<dbReference type="GO" id="GO:0097171">
    <property type="term" value="P:ADP-L-glycero-beta-D-manno-heptose biosynthetic process"/>
    <property type="evidence" value="ECO:0007669"/>
    <property type="project" value="UniProtKB-UniPathway"/>
</dbReference>
<dbReference type="GO" id="GO:0005975">
    <property type="term" value="P:carbohydrate metabolic process"/>
    <property type="evidence" value="ECO:0007669"/>
    <property type="project" value="UniProtKB-UniRule"/>
</dbReference>
<dbReference type="CDD" id="cd05248">
    <property type="entry name" value="ADP_GME_SDR_e"/>
    <property type="match status" value="1"/>
</dbReference>
<dbReference type="Gene3D" id="3.40.50.720">
    <property type="entry name" value="NAD(P)-binding Rossmann-like Domain"/>
    <property type="match status" value="1"/>
</dbReference>
<dbReference type="Gene3D" id="3.90.25.10">
    <property type="entry name" value="UDP-galactose 4-epimerase, domain 1"/>
    <property type="match status" value="1"/>
</dbReference>
<dbReference type="HAMAP" id="MF_01601">
    <property type="entry name" value="Heptose_epimerase"/>
    <property type="match status" value="1"/>
</dbReference>
<dbReference type="InterPro" id="IPR001509">
    <property type="entry name" value="Epimerase_deHydtase"/>
</dbReference>
<dbReference type="InterPro" id="IPR011912">
    <property type="entry name" value="Heptose_epim"/>
</dbReference>
<dbReference type="InterPro" id="IPR036291">
    <property type="entry name" value="NAD(P)-bd_dom_sf"/>
</dbReference>
<dbReference type="NCBIfam" id="TIGR02197">
    <property type="entry name" value="heptose_epim"/>
    <property type="match status" value="1"/>
</dbReference>
<dbReference type="NCBIfam" id="NF008360">
    <property type="entry name" value="PRK11150.1"/>
    <property type="match status" value="1"/>
</dbReference>
<dbReference type="PANTHER" id="PTHR43103:SF3">
    <property type="entry name" value="ADP-L-GLYCERO-D-MANNO-HEPTOSE-6-EPIMERASE"/>
    <property type="match status" value="1"/>
</dbReference>
<dbReference type="PANTHER" id="PTHR43103">
    <property type="entry name" value="NUCLEOSIDE-DIPHOSPHATE-SUGAR EPIMERASE"/>
    <property type="match status" value="1"/>
</dbReference>
<dbReference type="Pfam" id="PF01370">
    <property type="entry name" value="Epimerase"/>
    <property type="match status" value="1"/>
</dbReference>
<dbReference type="SUPFAM" id="SSF51735">
    <property type="entry name" value="NAD(P)-binding Rossmann-fold domains"/>
    <property type="match status" value="1"/>
</dbReference>
<protein>
    <recommendedName>
        <fullName evidence="1">ADP-L-glycero-D-manno-heptose-6-epimerase</fullName>
        <ecNumber evidence="1">5.1.3.20</ecNumber>
    </recommendedName>
    <alternativeName>
        <fullName evidence="1">ADP-L-glycero-beta-D-manno-heptose-6-epimerase</fullName>
        <shortName evidence="1">ADP-glyceromanno-heptose 6-epimerase</shortName>
        <shortName evidence="1">ADP-hep 6-epimerase</shortName>
        <shortName evidence="1">AGME</shortName>
    </alternativeName>
</protein>
<proteinExistence type="inferred from homology"/>
<feature type="chain" id="PRO_1000148083" description="ADP-L-glycero-D-manno-heptose-6-epimerase">
    <location>
        <begin position="1"/>
        <end position="310"/>
    </location>
</feature>
<feature type="active site" description="Proton acceptor" evidence="1">
    <location>
        <position position="140"/>
    </location>
</feature>
<feature type="active site" description="Proton acceptor" evidence="1">
    <location>
        <position position="178"/>
    </location>
</feature>
<feature type="binding site" evidence="1">
    <location>
        <begin position="10"/>
        <end position="11"/>
    </location>
    <ligand>
        <name>NADP(+)</name>
        <dbReference type="ChEBI" id="CHEBI:58349"/>
    </ligand>
</feature>
<feature type="binding site" evidence="1">
    <location>
        <begin position="31"/>
        <end position="32"/>
    </location>
    <ligand>
        <name>NADP(+)</name>
        <dbReference type="ChEBI" id="CHEBI:58349"/>
    </ligand>
</feature>
<feature type="binding site" evidence="1">
    <location>
        <position position="38"/>
    </location>
    <ligand>
        <name>NADP(+)</name>
        <dbReference type="ChEBI" id="CHEBI:58349"/>
    </ligand>
</feature>
<feature type="binding site" evidence="1">
    <location>
        <position position="53"/>
    </location>
    <ligand>
        <name>NADP(+)</name>
        <dbReference type="ChEBI" id="CHEBI:58349"/>
    </ligand>
</feature>
<feature type="binding site" evidence="1">
    <location>
        <begin position="75"/>
        <end position="79"/>
    </location>
    <ligand>
        <name>NADP(+)</name>
        <dbReference type="ChEBI" id="CHEBI:58349"/>
    </ligand>
</feature>
<feature type="binding site" evidence="1">
    <location>
        <position position="92"/>
    </location>
    <ligand>
        <name>NADP(+)</name>
        <dbReference type="ChEBI" id="CHEBI:58349"/>
    </ligand>
</feature>
<feature type="binding site" evidence="1">
    <location>
        <position position="144"/>
    </location>
    <ligand>
        <name>NADP(+)</name>
        <dbReference type="ChEBI" id="CHEBI:58349"/>
    </ligand>
</feature>
<feature type="binding site" evidence="1">
    <location>
        <position position="169"/>
    </location>
    <ligand>
        <name>substrate</name>
    </ligand>
</feature>
<feature type="binding site" evidence="1">
    <location>
        <position position="170"/>
    </location>
    <ligand>
        <name>NADP(+)</name>
        <dbReference type="ChEBI" id="CHEBI:58349"/>
    </ligand>
</feature>
<feature type="binding site" evidence="1">
    <location>
        <position position="178"/>
    </location>
    <ligand>
        <name>NADP(+)</name>
        <dbReference type="ChEBI" id="CHEBI:58349"/>
    </ligand>
</feature>
<feature type="binding site" evidence="1">
    <location>
        <position position="180"/>
    </location>
    <ligand>
        <name>substrate</name>
    </ligand>
</feature>
<feature type="binding site" evidence="1">
    <location>
        <position position="187"/>
    </location>
    <ligand>
        <name>substrate</name>
    </ligand>
</feature>
<feature type="binding site" evidence="1">
    <location>
        <begin position="201"/>
        <end position="204"/>
    </location>
    <ligand>
        <name>substrate</name>
    </ligand>
</feature>
<feature type="binding site" evidence="1">
    <location>
        <position position="209"/>
    </location>
    <ligand>
        <name>substrate</name>
    </ligand>
</feature>
<feature type="binding site" evidence="1">
    <location>
        <position position="272"/>
    </location>
    <ligand>
        <name>substrate</name>
    </ligand>
</feature>
<reference key="1">
    <citation type="journal article" date="2008" name="PLoS Genet.">
        <title>Complete genome sequence of the N2-fixing broad host range endophyte Klebsiella pneumoniae 342 and virulence predictions verified in mice.</title>
        <authorList>
            <person name="Fouts D.E."/>
            <person name="Tyler H.L."/>
            <person name="DeBoy R.T."/>
            <person name="Daugherty S."/>
            <person name="Ren Q."/>
            <person name="Badger J.H."/>
            <person name="Durkin A.S."/>
            <person name="Huot H."/>
            <person name="Shrivastava S."/>
            <person name="Kothari S."/>
            <person name="Dodson R.J."/>
            <person name="Mohamoud Y."/>
            <person name="Khouri H."/>
            <person name="Roesch L.F.W."/>
            <person name="Krogfelt K.A."/>
            <person name="Struve C."/>
            <person name="Triplett E.W."/>
            <person name="Methe B.A."/>
        </authorList>
    </citation>
    <scope>NUCLEOTIDE SEQUENCE [LARGE SCALE GENOMIC DNA]</scope>
    <source>
        <strain>342</strain>
    </source>
</reference>
<name>HLDD_KLEP3</name>
<sequence length="310" mass="34923">MIIVTGGAGFIGSNIVKALNDKGITDILVVDNLKDGTKFVNLVDLNIADYMDKEDFLIQIMAGEEFGEIEAIFHEGACSSTTEWDGKYMMDNNYQYSKELLHYCLEREIPFLYASSAATYGGRTSDFIESREYEQPLNVYGYSKFLFDEYVRQILPEANSQIVGFRYFNVYGPREGHKGSMASVAFHLNTQLNNGESPKLFEGSDGFKRDFVYVGDVADVNLWFWENGVSGIFNLGTGRAESFQAVADATLAFHKKGSIEYIPFPDKLKGRYQAFTQADLTNLRKAGYDKPFKTVAEGVTEYMAWLNRDA</sequence>
<comment type="function">
    <text evidence="1">Catalyzes the interconversion between ADP-D-glycero-beta-D-manno-heptose and ADP-L-glycero-beta-D-manno-heptose via an epimerization at carbon 6 of the heptose.</text>
</comment>
<comment type="catalytic activity">
    <reaction evidence="1">
        <text>ADP-D-glycero-beta-D-manno-heptose = ADP-L-glycero-beta-D-manno-heptose</text>
        <dbReference type="Rhea" id="RHEA:17577"/>
        <dbReference type="ChEBI" id="CHEBI:59967"/>
        <dbReference type="ChEBI" id="CHEBI:61506"/>
        <dbReference type="EC" id="5.1.3.20"/>
    </reaction>
</comment>
<comment type="cofactor">
    <cofactor evidence="1">
        <name>NADP(+)</name>
        <dbReference type="ChEBI" id="CHEBI:58349"/>
    </cofactor>
    <text evidence="1">Binds 1 NADP(+) per subunit.</text>
</comment>
<comment type="pathway">
    <text evidence="1">Nucleotide-sugar biosynthesis; ADP-L-glycero-beta-D-manno-heptose biosynthesis; ADP-L-glycero-beta-D-manno-heptose from D-glycero-beta-D-manno-heptose 7-phosphate: step 4/4.</text>
</comment>
<comment type="subunit">
    <text evidence="1">Homopentamer.</text>
</comment>
<comment type="domain">
    <text evidence="1">Contains a large N-terminal NADP-binding domain, and a smaller C-terminal substrate-binding domain.</text>
</comment>
<comment type="similarity">
    <text evidence="1">Belongs to the NAD(P)-dependent epimerase/dehydratase family. HldD subfamily.</text>
</comment>